<proteinExistence type="evidence at transcript level"/>
<sequence length="421" mass="49837">MWCHRLSHLQSRLQDLLRGRVTRWALQQSNFKSLFPLAIYWHHTASKSLNCVWQQHEDHFELQYANNVMRFDYVWLRDHCRSASCYNSKTHQRSLDTASVDLCIQPQTIHLDETTLFFTWPDGHVTRYDLDWLMKNSYEGQKQKVIQPRILWNAEIYQQAQVPAVDFQTFLETKEGLKNFLQNFLLYGIAFVENVPPTQKHTEKLAERISLIRETIYGRMWFFTSDFSRGDTAYTKLALDRHTDTTYFQEPCGIQVFHCLKHEGTGGRTLLVDGFYAAEQVLQKAPEEFELLSKVPLKHEYIENVGECQNHMIGVGPVLNIYPWNKELYLIRYNNYDRAVINTVPYDVVHRWYTAHRTLTRELRRPENEFWVKLKPGKVLFIDNWRVLHGRESFTGYRQLCGCYLTRDDVLNTARLLGLQA</sequence>
<accession>Q0VC74</accession>
<feature type="transit peptide" description="Mitochondrion" evidence="1">
    <location>
        <begin position="1"/>
        <end position="15"/>
    </location>
</feature>
<feature type="chain" id="PRO_0000260156" description="Trimethyllysine dioxygenase, mitochondrial">
    <location>
        <begin position="16"/>
        <end position="421"/>
    </location>
</feature>
<feature type="binding site" evidence="1">
    <location>
        <position position="242"/>
    </location>
    <ligand>
        <name>Fe cation</name>
        <dbReference type="ChEBI" id="CHEBI:24875"/>
        <note>catalytic</note>
    </ligand>
</feature>
<feature type="binding site" evidence="1">
    <location>
        <position position="244"/>
    </location>
    <ligand>
        <name>Fe cation</name>
        <dbReference type="ChEBI" id="CHEBI:24875"/>
        <note>catalytic</note>
    </ligand>
</feature>
<feature type="binding site" evidence="1">
    <location>
        <position position="389"/>
    </location>
    <ligand>
        <name>Fe cation</name>
        <dbReference type="ChEBI" id="CHEBI:24875"/>
        <note>catalytic</note>
    </ligand>
</feature>
<feature type="modified residue" description="N6-acetyllysine" evidence="3">
    <location>
        <position position="236"/>
    </location>
</feature>
<reference key="1">
    <citation type="submission" date="2006-08" db="EMBL/GenBank/DDBJ databases">
        <authorList>
            <consortium name="NIH - Mammalian Gene Collection (MGC) project"/>
        </authorList>
    </citation>
    <scope>NUCLEOTIDE SEQUENCE [LARGE SCALE MRNA]</scope>
    <source>
        <strain>Hereford</strain>
        <tissue>Ascending colon</tissue>
    </source>
</reference>
<dbReference type="EC" id="1.14.11.8" evidence="3"/>
<dbReference type="EMBL" id="BC120318">
    <property type="protein sequence ID" value="AAI20319.1"/>
    <property type="molecule type" value="mRNA"/>
</dbReference>
<dbReference type="RefSeq" id="NP_001069532.1">
    <property type="nucleotide sequence ID" value="NM_001076064.1"/>
</dbReference>
<dbReference type="SMR" id="Q0VC74"/>
<dbReference type="FunCoup" id="Q0VC74">
    <property type="interactions" value="471"/>
</dbReference>
<dbReference type="STRING" id="9913.ENSBTAP00000015469"/>
<dbReference type="PaxDb" id="9913-ENSBTAP00000015469"/>
<dbReference type="Ensembl" id="ENSBTAT00000015469.5">
    <property type="protein sequence ID" value="ENSBTAP00000015469.5"/>
    <property type="gene ID" value="ENSBTAG00000011648.7"/>
</dbReference>
<dbReference type="GeneID" id="535630"/>
<dbReference type="KEGG" id="bta:535630"/>
<dbReference type="CTD" id="55217"/>
<dbReference type="VEuPathDB" id="HostDB:ENSBTAG00000011648"/>
<dbReference type="VGNC" id="VGNC:36134">
    <property type="gene designation" value="TMLHE"/>
</dbReference>
<dbReference type="eggNOG" id="KOG3889">
    <property type="taxonomic scope" value="Eukaryota"/>
</dbReference>
<dbReference type="GeneTree" id="ENSGT00530000063582"/>
<dbReference type="HOGENOM" id="CLU_021859_2_0_1"/>
<dbReference type="InParanoid" id="Q0VC74"/>
<dbReference type="OMA" id="EKVCIQP"/>
<dbReference type="OrthoDB" id="408743at2759"/>
<dbReference type="Reactome" id="R-BTA-71262">
    <property type="pathway name" value="Carnitine synthesis"/>
</dbReference>
<dbReference type="UniPathway" id="UPA00118"/>
<dbReference type="Proteomes" id="UP000009136">
    <property type="component" value="Chromosome X"/>
</dbReference>
<dbReference type="Bgee" id="ENSBTAG00000011648">
    <property type="expression patterns" value="Expressed in metanephros cortex and 104 other cell types or tissues"/>
</dbReference>
<dbReference type="GO" id="GO:0005759">
    <property type="term" value="C:mitochondrial matrix"/>
    <property type="evidence" value="ECO:0007669"/>
    <property type="project" value="UniProtKB-SubCell"/>
</dbReference>
<dbReference type="GO" id="GO:0005739">
    <property type="term" value="C:mitochondrion"/>
    <property type="evidence" value="ECO:0000318"/>
    <property type="project" value="GO_Central"/>
</dbReference>
<dbReference type="GO" id="GO:0005506">
    <property type="term" value="F:iron ion binding"/>
    <property type="evidence" value="ECO:0007669"/>
    <property type="project" value="InterPro"/>
</dbReference>
<dbReference type="GO" id="GO:0050353">
    <property type="term" value="F:trimethyllysine dioxygenase activity"/>
    <property type="evidence" value="ECO:0000250"/>
    <property type="project" value="UniProtKB"/>
</dbReference>
<dbReference type="GO" id="GO:0045329">
    <property type="term" value="P:carnitine biosynthetic process"/>
    <property type="evidence" value="ECO:0000250"/>
    <property type="project" value="UniProtKB"/>
</dbReference>
<dbReference type="CDD" id="cd00250">
    <property type="entry name" value="CAS_like"/>
    <property type="match status" value="1"/>
</dbReference>
<dbReference type="FunFam" id="3.60.130.10:FF:000001">
    <property type="entry name" value="Trimethyllysine dioxygenase, mitochondrial"/>
    <property type="match status" value="1"/>
</dbReference>
<dbReference type="FunFam" id="3.30.2020.30:FF:000003">
    <property type="entry name" value="trimethyllysine dioxygenase, mitochondrial isoform X1"/>
    <property type="match status" value="1"/>
</dbReference>
<dbReference type="Gene3D" id="3.30.2020.30">
    <property type="match status" value="1"/>
</dbReference>
<dbReference type="Gene3D" id="3.60.130.10">
    <property type="entry name" value="Clavaminate synthase-like"/>
    <property type="match status" value="1"/>
</dbReference>
<dbReference type="InterPro" id="IPR050411">
    <property type="entry name" value="AlphaKG_dependent_hydroxylases"/>
</dbReference>
<dbReference type="InterPro" id="IPR010376">
    <property type="entry name" value="GBBH-like_N"/>
</dbReference>
<dbReference type="InterPro" id="IPR038492">
    <property type="entry name" value="GBBH-like_N_sf"/>
</dbReference>
<dbReference type="InterPro" id="IPR042098">
    <property type="entry name" value="TauD-like_sf"/>
</dbReference>
<dbReference type="InterPro" id="IPR003819">
    <property type="entry name" value="TauD/TfdA-like"/>
</dbReference>
<dbReference type="InterPro" id="IPR012776">
    <property type="entry name" value="Trimethyllysine_dOase"/>
</dbReference>
<dbReference type="NCBIfam" id="TIGR02410">
    <property type="entry name" value="carnitine_TMLD"/>
    <property type="match status" value="1"/>
</dbReference>
<dbReference type="PANTHER" id="PTHR10696">
    <property type="entry name" value="GAMMA-BUTYROBETAINE HYDROXYLASE-RELATED"/>
    <property type="match status" value="1"/>
</dbReference>
<dbReference type="PANTHER" id="PTHR10696:SF51">
    <property type="entry name" value="TRIMETHYLLYSINE DIOXYGENASE, MITOCHONDRIAL"/>
    <property type="match status" value="1"/>
</dbReference>
<dbReference type="Pfam" id="PF06155">
    <property type="entry name" value="GBBH-like_N"/>
    <property type="match status" value="1"/>
</dbReference>
<dbReference type="Pfam" id="PF02668">
    <property type="entry name" value="TauD"/>
    <property type="match status" value="1"/>
</dbReference>
<dbReference type="SUPFAM" id="SSF51197">
    <property type="entry name" value="Clavaminate synthase-like"/>
    <property type="match status" value="1"/>
</dbReference>
<gene>
    <name type="primary">TMLHE</name>
</gene>
<protein>
    <recommendedName>
        <fullName>Trimethyllysine dioxygenase, mitochondrial</fullName>
        <ecNumber evidence="3">1.14.11.8</ecNumber>
    </recommendedName>
    <alternativeName>
        <fullName>Epsilon-trimethyllysine 2-oxoglutarate dioxygenase</fullName>
    </alternativeName>
    <alternativeName>
        <fullName>TML hydroxylase</fullName>
    </alternativeName>
    <alternativeName>
        <fullName>TML-alpha-ketoglutarate dioxygenase</fullName>
        <shortName>TML dioxygenase</shortName>
        <shortName>TMLD</shortName>
    </alternativeName>
</protein>
<evidence type="ECO:0000250" key="1"/>
<evidence type="ECO:0000250" key="2">
    <source>
        <dbReference type="UniProtKB" id="Q91ZW6"/>
    </source>
</evidence>
<evidence type="ECO:0000250" key="3">
    <source>
        <dbReference type="UniProtKB" id="Q9NVH6"/>
    </source>
</evidence>
<evidence type="ECO:0000305" key="4"/>
<keyword id="KW-0007">Acetylation</keyword>
<keyword id="KW-0124">Carnitine biosynthesis</keyword>
<keyword id="KW-0223">Dioxygenase</keyword>
<keyword id="KW-0408">Iron</keyword>
<keyword id="KW-0479">Metal-binding</keyword>
<keyword id="KW-0496">Mitochondrion</keyword>
<keyword id="KW-0560">Oxidoreductase</keyword>
<keyword id="KW-1185">Reference proteome</keyword>
<keyword id="KW-0809">Transit peptide</keyword>
<comment type="function">
    <text evidence="3">Converts trimethyllysine (TML) into hydroxytrimethyllysine (HTML).</text>
</comment>
<comment type="catalytic activity">
    <reaction evidence="3">
        <text>N(6),N(6),N(6)-trimethyl-L-lysine + 2-oxoglutarate + O2 = (3S)-3-hydroxy-N(6),N(6),N(6)-trimethyl-L-lysine + succinate + CO2</text>
        <dbReference type="Rhea" id="RHEA:14181"/>
        <dbReference type="ChEBI" id="CHEBI:15379"/>
        <dbReference type="ChEBI" id="CHEBI:16526"/>
        <dbReference type="ChEBI" id="CHEBI:16810"/>
        <dbReference type="ChEBI" id="CHEBI:30031"/>
        <dbReference type="ChEBI" id="CHEBI:58100"/>
        <dbReference type="ChEBI" id="CHEBI:141499"/>
        <dbReference type="EC" id="1.14.11.8"/>
    </reaction>
</comment>
<comment type="cofactor">
    <cofactor evidence="1">
        <name>Fe(2+)</name>
        <dbReference type="ChEBI" id="CHEBI:29033"/>
    </cofactor>
    <text evidence="1">Binds 1 Fe(2+) ion per subunit.</text>
</comment>
<comment type="cofactor">
    <cofactor evidence="1">
        <name>L-ascorbate</name>
        <dbReference type="ChEBI" id="CHEBI:38290"/>
    </cofactor>
</comment>
<comment type="pathway">
    <text>Amine and polyamine biosynthesis; carnitine biosynthesis.</text>
</comment>
<comment type="subunit">
    <text evidence="2">Homodimer.</text>
</comment>
<comment type="subcellular location">
    <subcellularLocation>
        <location evidence="3">Mitochondrion matrix</location>
    </subcellularLocation>
</comment>
<comment type="similarity">
    <text evidence="4">Belongs to the gamma-BBH/TMLD family.</text>
</comment>
<organism>
    <name type="scientific">Bos taurus</name>
    <name type="common">Bovine</name>
    <dbReference type="NCBI Taxonomy" id="9913"/>
    <lineage>
        <taxon>Eukaryota</taxon>
        <taxon>Metazoa</taxon>
        <taxon>Chordata</taxon>
        <taxon>Craniata</taxon>
        <taxon>Vertebrata</taxon>
        <taxon>Euteleostomi</taxon>
        <taxon>Mammalia</taxon>
        <taxon>Eutheria</taxon>
        <taxon>Laurasiatheria</taxon>
        <taxon>Artiodactyla</taxon>
        <taxon>Ruminantia</taxon>
        <taxon>Pecora</taxon>
        <taxon>Bovidae</taxon>
        <taxon>Bovinae</taxon>
        <taxon>Bos</taxon>
    </lineage>
</organism>
<name>TMLH_BOVIN</name>